<sequence length="145" mass="15404">MKALLQRVGAARVEVGGEIVGSIDRGLLVLVGVEPEDGERCAAKMLHKLLNYRVFGDAEGKMNRSLADVQGGLLLVSQFTLAANTRSGLRPSFSSAAPPAQGEAVFEHLVKLARVAHPQVATGRFGADMQVHLVNDGPVTFLLEC</sequence>
<gene>
    <name evidence="1" type="primary">dtd</name>
    <name type="ordered locus">PSPA7_5818</name>
</gene>
<evidence type="ECO:0000255" key="1">
    <source>
        <dbReference type="HAMAP-Rule" id="MF_00518"/>
    </source>
</evidence>
<keyword id="KW-0963">Cytoplasm</keyword>
<keyword id="KW-0378">Hydrolase</keyword>
<keyword id="KW-0694">RNA-binding</keyword>
<keyword id="KW-0820">tRNA-binding</keyword>
<organism>
    <name type="scientific">Pseudomonas paraeruginosa (strain DSM 24068 / PA7)</name>
    <name type="common">Pseudomonas aeruginosa (strain PA7)</name>
    <dbReference type="NCBI Taxonomy" id="381754"/>
    <lineage>
        <taxon>Bacteria</taxon>
        <taxon>Pseudomonadati</taxon>
        <taxon>Pseudomonadota</taxon>
        <taxon>Gammaproteobacteria</taxon>
        <taxon>Pseudomonadales</taxon>
        <taxon>Pseudomonadaceae</taxon>
        <taxon>Pseudomonas</taxon>
        <taxon>Pseudomonas paraeruginosa</taxon>
    </lineage>
</organism>
<reference key="1">
    <citation type="submission" date="2007-06" db="EMBL/GenBank/DDBJ databases">
        <authorList>
            <person name="Dodson R.J."/>
            <person name="Harkins D."/>
            <person name="Paulsen I.T."/>
        </authorList>
    </citation>
    <scope>NUCLEOTIDE SEQUENCE [LARGE SCALE GENOMIC DNA]</scope>
    <source>
        <strain>DSM 24068 / PA7</strain>
    </source>
</reference>
<dbReference type="EC" id="3.1.1.96" evidence="1"/>
<dbReference type="EMBL" id="CP000744">
    <property type="protein sequence ID" value="ABR83386.1"/>
    <property type="molecule type" value="Genomic_DNA"/>
</dbReference>
<dbReference type="RefSeq" id="WP_012077745.1">
    <property type="nucleotide sequence ID" value="NC_009656.1"/>
</dbReference>
<dbReference type="SMR" id="A6VDK2"/>
<dbReference type="GeneID" id="77223616"/>
<dbReference type="KEGG" id="pap:PSPA7_5818"/>
<dbReference type="HOGENOM" id="CLU_076901_1_1_6"/>
<dbReference type="Proteomes" id="UP000001582">
    <property type="component" value="Chromosome"/>
</dbReference>
<dbReference type="GO" id="GO:0005737">
    <property type="term" value="C:cytoplasm"/>
    <property type="evidence" value="ECO:0007669"/>
    <property type="project" value="UniProtKB-SubCell"/>
</dbReference>
<dbReference type="GO" id="GO:0051500">
    <property type="term" value="F:D-tyrosyl-tRNA(Tyr) deacylase activity"/>
    <property type="evidence" value="ECO:0007669"/>
    <property type="project" value="TreeGrafter"/>
</dbReference>
<dbReference type="GO" id="GO:0106026">
    <property type="term" value="F:Gly-tRNA(Ala) deacylase activity"/>
    <property type="evidence" value="ECO:0007669"/>
    <property type="project" value="UniProtKB-UniRule"/>
</dbReference>
<dbReference type="GO" id="GO:0043908">
    <property type="term" value="F:Ser(Gly)-tRNA(Ala) hydrolase activity"/>
    <property type="evidence" value="ECO:0007669"/>
    <property type="project" value="UniProtKB-UniRule"/>
</dbReference>
<dbReference type="GO" id="GO:0000049">
    <property type="term" value="F:tRNA binding"/>
    <property type="evidence" value="ECO:0007669"/>
    <property type="project" value="UniProtKB-UniRule"/>
</dbReference>
<dbReference type="GO" id="GO:0019478">
    <property type="term" value="P:D-amino acid catabolic process"/>
    <property type="evidence" value="ECO:0007669"/>
    <property type="project" value="UniProtKB-UniRule"/>
</dbReference>
<dbReference type="CDD" id="cd00563">
    <property type="entry name" value="Dtyr_deacylase"/>
    <property type="match status" value="1"/>
</dbReference>
<dbReference type="FunFam" id="3.50.80.10:FF:000001">
    <property type="entry name" value="D-aminoacyl-tRNA deacylase"/>
    <property type="match status" value="1"/>
</dbReference>
<dbReference type="Gene3D" id="3.50.80.10">
    <property type="entry name" value="D-tyrosyl-tRNA(Tyr) deacylase"/>
    <property type="match status" value="1"/>
</dbReference>
<dbReference type="HAMAP" id="MF_00518">
    <property type="entry name" value="Deacylase_Dtd"/>
    <property type="match status" value="1"/>
</dbReference>
<dbReference type="InterPro" id="IPR003732">
    <property type="entry name" value="Daa-tRNA_deacyls_DTD"/>
</dbReference>
<dbReference type="InterPro" id="IPR023509">
    <property type="entry name" value="DTD-like_sf"/>
</dbReference>
<dbReference type="NCBIfam" id="TIGR00256">
    <property type="entry name" value="D-aminoacyl-tRNA deacylase"/>
    <property type="match status" value="1"/>
</dbReference>
<dbReference type="PANTHER" id="PTHR10472:SF5">
    <property type="entry name" value="D-AMINOACYL-TRNA DEACYLASE 1"/>
    <property type="match status" value="1"/>
</dbReference>
<dbReference type="PANTHER" id="PTHR10472">
    <property type="entry name" value="D-TYROSYL-TRNA TYR DEACYLASE"/>
    <property type="match status" value="1"/>
</dbReference>
<dbReference type="Pfam" id="PF02580">
    <property type="entry name" value="Tyr_Deacylase"/>
    <property type="match status" value="1"/>
</dbReference>
<dbReference type="SUPFAM" id="SSF69500">
    <property type="entry name" value="DTD-like"/>
    <property type="match status" value="1"/>
</dbReference>
<accession>A6VDK2</accession>
<name>DTD_PSEP7</name>
<comment type="function">
    <text evidence="1">An aminoacyl-tRNA editing enzyme that deacylates mischarged D-aminoacyl-tRNAs. Also deacylates mischarged glycyl-tRNA(Ala), protecting cells against glycine mischarging by AlaRS. Acts via tRNA-based rather than protein-based catalysis; rejects L-amino acids rather than detecting D-amino acids in the active site. By recycling D-aminoacyl-tRNA to D-amino acids and free tRNA molecules, this enzyme counteracts the toxicity associated with the formation of D-aminoacyl-tRNA entities in vivo and helps enforce protein L-homochirality.</text>
</comment>
<comment type="catalytic activity">
    <reaction evidence="1">
        <text>glycyl-tRNA(Ala) + H2O = tRNA(Ala) + glycine + H(+)</text>
        <dbReference type="Rhea" id="RHEA:53744"/>
        <dbReference type="Rhea" id="RHEA-COMP:9657"/>
        <dbReference type="Rhea" id="RHEA-COMP:13640"/>
        <dbReference type="ChEBI" id="CHEBI:15377"/>
        <dbReference type="ChEBI" id="CHEBI:15378"/>
        <dbReference type="ChEBI" id="CHEBI:57305"/>
        <dbReference type="ChEBI" id="CHEBI:78442"/>
        <dbReference type="ChEBI" id="CHEBI:78522"/>
        <dbReference type="EC" id="3.1.1.96"/>
    </reaction>
</comment>
<comment type="catalytic activity">
    <reaction evidence="1">
        <text>a D-aminoacyl-tRNA + H2O = a tRNA + a D-alpha-amino acid + H(+)</text>
        <dbReference type="Rhea" id="RHEA:13953"/>
        <dbReference type="Rhea" id="RHEA-COMP:10123"/>
        <dbReference type="Rhea" id="RHEA-COMP:10124"/>
        <dbReference type="ChEBI" id="CHEBI:15377"/>
        <dbReference type="ChEBI" id="CHEBI:15378"/>
        <dbReference type="ChEBI" id="CHEBI:59871"/>
        <dbReference type="ChEBI" id="CHEBI:78442"/>
        <dbReference type="ChEBI" id="CHEBI:79333"/>
        <dbReference type="EC" id="3.1.1.96"/>
    </reaction>
</comment>
<comment type="subunit">
    <text evidence="1">Homodimer.</text>
</comment>
<comment type="subcellular location">
    <subcellularLocation>
        <location evidence="1">Cytoplasm</location>
    </subcellularLocation>
</comment>
<comment type="domain">
    <text evidence="1">A Gly-cisPro motif from one monomer fits into the active site of the other monomer to allow specific chiral rejection of L-amino acids.</text>
</comment>
<comment type="similarity">
    <text evidence="1">Belongs to the DTD family.</text>
</comment>
<protein>
    <recommendedName>
        <fullName evidence="1">D-aminoacyl-tRNA deacylase</fullName>
        <shortName evidence="1">DTD</shortName>
        <ecNumber evidence="1">3.1.1.96</ecNumber>
    </recommendedName>
    <alternativeName>
        <fullName evidence="1">Gly-tRNA(Ala) deacylase</fullName>
    </alternativeName>
</protein>
<feature type="chain" id="PRO_1000050869" description="D-aminoacyl-tRNA deacylase">
    <location>
        <begin position="1"/>
        <end position="145"/>
    </location>
</feature>
<feature type="short sequence motif" description="Gly-cisPro motif, important for rejection of L-amino acids" evidence="1">
    <location>
        <begin position="137"/>
        <end position="138"/>
    </location>
</feature>
<proteinExistence type="inferred from homology"/>